<protein>
    <recommendedName>
        <fullName evidence="9">HTH-type transcriptional repressor NemR</fullName>
    </recommendedName>
    <alternativeName>
        <fullName evidence="8">Bleach-sensing transcription factor</fullName>
    </alternativeName>
    <alternativeName>
        <fullName evidence="9">Redox-regulated transcription factor NemR</fullName>
    </alternativeName>
</protein>
<proteinExistence type="evidence at protein level"/>
<feature type="chain" id="PRO_0000070639" description="HTH-type transcriptional repressor NemR">
    <location>
        <begin position="1"/>
        <end position="199"/>
    </location>
</feature>
<feature type="domain" description="HTH tetR-type" evidence="1">
    <location>
        <begin position="7"/>
        <end position="67"/>
    </location>
</feature>
<feature type="DNA-binding region" description="H-T-H motif" evidence="1">
    <location>
        <begin position="30"/>
        <end position="49"/>
    </location>
</feature>
<feature type="site" description="Plays a central role in response to RCS" evidence="4 6">
    <location>
        <position position="106"/>
    </location>
</feature>
<feature type="disulfide bond" description="Interchain; in the presence of RES; transient" evidence="3">
    <location>
        <position position="21"/>
    </location>
</feature>
<feature type="disulfide bond" description="Interchain; in the presence of RES; transient" evidence="3">
    <location>
        <position position="116"/>
    </location>
</feature>
<feature type="helix" evidence="11">
    <location>
        <begin position="8"/>
        <end position="24"/>
    </location>
</feature>
<feature type="turn" evidence="11">
    <location>
        <begin position="26"/>
        <end position="28"/>
    </location>
</feature>
<feature type="helix" evidence="11">
    <location>
        <begin position="31"/>
        <end position="38"/>
    </location>
</feature>
<feature type="helix" evidence="11">
    <location>
        <begin position="42"/>
        <end position="48"/>
    </location>
</feature>
<feature type="helix" evidence="11">
    <location>
        <begin position="52"/>
        <end position="77"/>
    </location>
</feature>
<feature type="strand" evidence="11">
    <location>
        <begin position="78"/>
        <end position="80"/>
    </location>
</feature>
<feature type="helix" evidence="11">
    <location>
        <begin position="82"/>
        <end position="95"/>
    </location>
</feature>
<feature type="helix" evidence="11">
    <location>
        <begin position="107"/>
        <end position="112"/>
    </location>
</feature>
<feature type="helix" evidence="11">
    <location>
        <begin position="113"/>
        <end position="117"/>
    </location>
</feature>
<feature type="helix" evidence="11">
    <location>
        <begin position="120"/>
        <end position="146"/>
    </location>
</feature>
<feature type="helix" evidence="11">
    <location>
        <begin position="156"/>
        <end position="177"/>
    </location>
</feature>
<feature type="helix" evidence="11">
    <location>
        <begin position="181"/>
        <end position="193"/>
    </location>
</feature>
<gene>
    <name evidence="7" type="primary">nemR</name>
    <name type="synonym">ydhM</name>
    <name type="ordered locus">b1649</name>
    <name type="ordered locus">JW5874</name>
</gene>
<sequence length="199" mass="22275">MNKHTEHDTREHLLATGEQLCLQRGFTGMGLSELLKTAEVPKGSFYHYFRSKEAFGVAMLERHYAAYHQRLTELLQSGEGNYRDRILAYYQQTLNQFCQHGTISGCLTVKLSAEVCDLSEDMRSAMDKGARGVIALLSQALENGRENHCLTFCGEPLQQAQVLYALWLGANLQAKISRSFEPLENALAHVKNIIATPAV</sequence>
<dbReference type="EMBL" id="U00096">
    <property type="protein sequence ID" value="AAC74721.3"/>
    <property type="molecule type" value="Genomic_DNA"/>
</dbReference>
<dbReference type="EMBL" id="AP009048">
    <property type="protein sequence ID" value="BAE76492.1"/>
    <property type="status" value="ALT_INIT"/>
    <property type="molecule type" value="Genomic_DNA"/>
</dbReference>
<dbReference type="PIR" id="C64922">
    <property type="entry name" value="C64922"/>
</dbReference>
<dbReference type="RefSeq" id="NP_416166.3">
    <property type="nucleotide sequence ID" value="NC_000913.3"/>
</dbReference>
<dbReference type="RefSeq" id="WP_001032936.1">
    <property type="nucleotide sequence ID" value="NZ_STEB01000003.1"/>
</dbReference>
<dbReference type="PDB" id="4YZE">
    <property type="method" value="X-ray"/>
    <property type="resolution" value="2.20 A"/>
    <property type="chains" value="A/B/C/D=1-199"/>
</dbReference>
<dbReference type="PDBsum" id="4YZE"/>
<dbReference type="SMR" id="P67430"/>
<dbReference type="BioGRID" id="4260266">
    <property type="interactions" value="98"/>
</dbReference>
<dbReference type="BioGRID" id="850526">
    <property type="interactions" value="1"/>
</dbReference>
<dbReference type="DIP" id="DIP-48165N"/>
<dbReference type="FunCoup" id="P67430">
    <property type="interactions" value="206"/>
</dbReference>
<dbReference type="IntAct" id="P67430">
    <property type="interactions" value="1"/>
</dbReference>
<dbReference type="STRING" id="511145.b1649"/>
<dbReference type="jPOST" id="P67430"/>
<dbReference type="PaxDb" id="511145-b1649"/>
<dbReference type="DNASU" id="946166"/>
<dbReference type="EnsemblBacteria" id="AAC74721">
    <property type="protein sequence ID" value="AAC74721"/>
    <property type="gene ID" value="b1649"/>
</dbReference>
<dbReference type="GeneID" id="75204494"/>
<dbReference type="GeneID" id="946166"/>
<dbReference type="KEGG" id="ecj:JW5874"/>
<dbReference type="KEGG" id="eco:b1649"/>
<dbReference type="KEGG" id="ecoc:C3026_09465"/>
<dbReference type="PATRIC" id="fig|1411691.4.peg.610"/>
<dbReference type="EchoBASE" id="EB3705"/>
<dbReference type="eggNOG" id="COG1309">
    <property type="taxonomic scope" value="Bacteria"/>
</dbReference>
<dbReference type="HOGENOM" id="CLU_069356_28_1_6"/>
<dbReference type="InParanoid" id="P67430"/>
<dbReference type="OMA" id="NQQGYAG"/>
<dbReference type="OrthoDB" id="4541465at2"/>
<dbReference type="PhylomeDB" id="P67430"/>
<dbReference type="BioCyc" id="EcoCyc:G6889-MONOMER"/>
<dbReference type="EvolutionaryTrace" id="P67430"/>
<dbReference type="PRO" id="PR:P67430"/>
<dbReference type="Proteomes" id="UP000000625">
    <property type="component" value="Chromosome"/>
</dbReference>
<dbReference type="GO" id="GO:0003677">
    <property type="term" value="F:DNA binding"/>
    <property type="evidence" value="ECO:0007669"/>
    <property type="project" value="UniProtKB-KW"/>
</dbReference>
<dbReference type="GO" id="GO:0003700">
    <property type="term" value="F:DNA-binding transcription factor activity"/>
    <property type="evidence" value="ECO:0000314"/>
    <property type="project" value="EcoCyc"/>
</dbReference>
<dbReference type="GO" id="GO:0045892">
    <property type="term" value="P:negative regulation of DNA-templated transcription"/>
    <property type="evidence" value="ECO:0000314"/>
    <property type="project" value="EcoCyc"/>
</dbReference>
<dbReference type="FunFam" id="1.10.357.10:FF:000011">
    <property type="entry name" value="Transcriptional regulator, TetR family"/>
    <property type="match status" value="1"/>
</dbReference>
<dbReference type="Gene3D" id="1.10.357.10">
    <property type="entry name" value="Tetracycline Repressor, domain 2"/>
    <property type="match status" value="1"/>
</dbReference>
<dbReference type="InterPro" id="IPR009057">
    <property type="entry name" value="Homeodomain-like_sf"/>
</dbReference>
<dbReference type="InterPro" id="IPR001647">
    <property type="entry name" value="HTH_TetR"/>
</dbReference>
<dbReference type="InterPro" id="IPR036271">
    <property type="entry name" value="Tet_transcr_reg_TetR-rel_C_sf"/>
</dbReference>
<dbReference type="InterPro" id="IPR011075">
    <property type="entry name" value="TetR_C"/>
</dbReference>
<dbReference type="PANTHER" id="PTHR47506:SF6">
    <property type="entry name" value="HTH-TYPE TRANSCRIPTIONAL REPRESSOR NEMR"/>
    <property type="match status" value="1"/>
</dbReference>
<dbReference type="PANTHER" id="PTHR47506">
    <property type="entry name" value="TRANSCRIPTIONAL REGULATORY PROTEIN"/>
    <property type="match status" value="1"/>
</dbReference>
<dbReference type="Pfam" id="PF16925">
    <property type="entry name" value="TetR_C_13"/>
    <property type="match status" value="1"/>
</dbReference>
<dbReference type="Pfam" id="PF00440">
    <property type="entry name" value="TetR_N"/>
    <property type="match status" value="1"/>
</dbReference>
<dbReference type="SUPFAM" id="SSF46689">
    <property type="entry name" value="Homeodomain-like"/>
    <property type="match status" value="1"/>
</dbReference>
<dbReference type="SUPFAM" id="SSF48498">
    <property type="entry name" value="Tetracyclin repressor-like, C-terminal domain"/>
    <property type="match status" value="1"/>
</dbReference>
<dbReference type="PROSITE" id="PS50977">
    <property type="entry name" value="HTH_TETR_2"/>
    <property type="match status" value="1"/>
</dbReference>
<evidence type="ECO:0000255" key="1">
    <source>
        <dbReference type="PROSITE-ProRule" id="PRU00335"/>
    </source>
</evidence>
<evidence type="ECO:0000269" key="2">
    <source>
    </source>
</evidence>
<evidence type="ECO:0000269" key="3">
    <source>
    </source>
</evidence>
<evidence type="ECO:0000269" key="4">
    <source>
    </source>
</evidence>
<evidence type="ECO:0000269" key="5">
    <source>
    </source>
</evidence>
<evidence type="ECO:0000269" key="6">
    <source>
    </source>
</evidence>
<evidence type="ECO:0000303" key="7">
    <source>
    </source>
</evidence>
<evidence type="ECO:0000303" key="8">
    <source>
    </source>
</evidence>
<evidence type="ECO:0000305" key="9"/>
<evidence type="ECO:0007744" key="10">
    <source>
        <dbReference type="PDB" id="4YZE"/>
    </source>
</evidence>
<evidence type="ECO:0007829" key="11">
    <source>
        <dbReference type="PDB" id="4YZE"/>
    </source>
</evidence>
<reference key="1">
    <citation type="journal article" date="1997" name="Science">
        <title>The complete genome sequence of Escherichia coli K-12.</title>
        <authorList>
            <person name="Blattner F.R."/>
            <person name="Plunkett G. III"/>
            <person name="Bloch C.A."/>
            <person name="Perna N.T."/>
            <person name="Burland V."/>
            <person name="Riley M."/>
            <person name="Collado-Vides J."/>
            <person name="Glasner J.D."/>
            <person name="Rode C.K."/>
            <person name="Mayhew G.F."/>
            <person name="Gregor J."/>
            <person name="Davis N.W."/>
            <person name="Kirkpatrick H.A."/>
            <person name="Goeden M.A."/>
            <person name="Rose D.J."/>
            <person name="Mau B."/>
            <person name="Shao Y."/>
        </authorList>
    </citation>
    <scope>NUCLEOTIDE SEQUENCE [LARGE SCALE GENOMIC DNA]</scope>
    <source>
        <strain>K12 / MG1655 / ATCC 47076</strain>
    </source>
</reference>
<reference key="2">
    <citation type="journal article" date="2006" name="Mol. Syst. Biol.">
        <title>Highly accurate genome sequences of Escherichia coli K-12 strains MG1655 and W3110.</title>
        <authorList>
            <person name="Hayashi K."/>
            <person name="Morooka N."/>
            <person name="Yamamoto Y."/>
            <person name="Fujita K."/>
            <person name="Isono K."/>
            <person name="Choi S."/>
            <person name="Ohtsubo E."/>
            <person name="Baba T."/>
            <person name="Wanner B.L."/>
            <person name="Mori H."/>
            <person name="Horiuchi T."/>
        </authorList>
    </citation>
    <scope>NUCLEOTIDE SEQUENCE [LARGE SCALE GENOMIC DNA]</scope>
    <source>
        <strain>K12 / W3110 / ATCC 27325 / DSM 5911</strain>
    </source>
</reference>
<reference key="3">
    <citation type="journal article" date="2008" name="J. Bacteriol.">
        <title>The uncharacterized transcription factor YdhM is the regulator of the nemA gene, encoding N-ethylmaleimide reductase.</title>
        <authorList>
            <person name="Umezawa Y."/>
            <person name="Shimada T."/>
            <person name="Kori A."/>
            <person name="Yamada K."/>
            <person name="Ishihama A."/>
        </authorList>
    </citation>
    <scope>FUNCTION</scope>
    <scope>DNA-BINDING</scope>
    <scope>ACTIVITY REGULATION</scope>
    <scope>INDUCTION</scope>
    <source>
        <strain>K12 / W3110 / ATCC 27325 / DSM 5911</strain>
    </source>
</reference>
<reference key="4">
    <citation type="journal article" date="2013" name="Mol. Microbiol.">
        <title>Novel regulatory system nemRA-gloA for electrophile reduction in Escherichia coli K-12.</title>
        <authorList>
            <person name="Lee C."/>
            <person name="Shin J."/>
            <person name="Park C."/>
        </authorList>
    </citation>
    <scope>FUNCTION</scope>
    <scope>ACTIVITY REGULATION</scope>
    <scope>DISULFIDE BOND</scope>
    <source>
        <strain>K12</strain>
    </source>
</reference>
<reference key="5">
    <citation type="journal article" date="2013" name="J. Biol. Chem.">
        <title>NemR is a bleach-sensing transcription factor.</title>
        <authorList>
            <person name="Gray M.J."/>
            <person name="Wholey W.Y."/>
            <person name="Parker B.W."/>
            <person name="Kim M."/>
            <person name="Jakob U."/>
        </authorList>
    </citation>
    <scope>FUNCTION</scope>
    <scope>ACTIVITY REGULATION</scope>
    <scope>INDUCTION</scope>
    <scope>DISRUPTION PHENOTYPE</scope>
</reference>
<reference key="6">
    <citation type="journal article" date="2013" name="Mol. Microbiol.">
        <title>Integrated stress response of Escherichia coli to methylglyoxal: transcriptional readthrough from the nemRA operon enhances protection through increased expression of glyoxalase I.</title>
        <authorList>
            <person name="Ozyamak E."/>
            <person name="de Almeida C."/>
            <person name="de Moura A.P."/>
            <person name="Miller S."/>
            <person name="Booth I.R."/>
        </authorList>
    </citation>
    <scope>FUNCTION</scope>
</reference>
<reference evidence="10" key="7">
    <citation type="journal article" date="2015" name="Antioxid. Redox Signal.">
        <title>Does the transcription factor NemR use a regulatory sulfenamide bond to sense bleach?</title>
        <authorList>
            <person name="Gray M.J."/>
            <person name="Li Y."/>
            <person name="Leichert L.I."/>
            <person name="Xu Z."/>
            <person name="Jakob U."/>
        </authorList>
    </citation>
    <scope>X-RAY CRYSTALLOGRAPHY (2.20 ANGSTROMS)</scope>
    <scope>SULFENAMIDE BOND</scope>
</reference>
<keyword id="KW-0002">3D-structure</keyword>
<keyword id="KW-1015">Disulfide bond</keyword>
<keyword id="KW-0238">DNA-binding</keyword>
<keyword id="KW-1185">Reference proteome</keyword>
<keyword id="KW-0678">Repressor</keyword>
<keyword id="KW-0346">Stress response</keyword>
<keyword id="KW-0804">Transcription</keyword>
<keyword id="KW-0805">Transcription regulation</keyword>
<organism>
    <name type="scientific">Escherichia coli (strain K12)</name>
    <dbReference type="NCBI Taxonomy" id="83333"/>
    <lineage>
        <taxon>Bacteria</taxon>
        <taxon>Pseudomonadati</taxon>
        <taxon>Pseudomonadota</taxon>
        <taxon>Gammaproteobacteria</taxon>
        <taxon>Enterobacterales</taxon>
        <taxon>Enterobacteriaceae</taxon>
        <taxon>Escherichia</taxon>
    </lineage>
</organism>
<comment type="function">
    <text evidence="2 3 4 5">Involved in response to both electrophiles and reactive chlorine species (RCS) (PubMed:23506073, PubMed:23536188). Represses the transcription of the nemRA-gloA operon by binding to the NemR box (PubMed:18567656, PubMed:23506073, PubMed:23536188). May sense electrophiles, primarily quinones and glyoxals, as redox signals and regulate the redox state by modulating the expression of nemA and gloA (PubMed:23506073). Also uses the oxidation status of HOCl-sensitive cysteine residues to respond to bleach and related RCS (PubMed:23536188). Involved in response to methylglyoxal (PubMed:23646895).</text>
</comment>
<comment type="activity regulation">
    <text evidence="2 3 4">The redox state of the cysteines plays a crucial role in the regulation of NemR activity (PubMed:23506073, PubMed:23536188). Inactivated by reversible oxidation of cysteine residues in the presence of inducers such as quinones, glyoxals and reactive chlorine species (PubMed:23506073, PubMed:23536188). Also irreversibly inactivated by alkylation in the presence of N-ethylmaleimide (NEM) and other Cys modification reagents (PubMed:18567656). Inactivation by inducers decreases DNA-binding affinity and leads to the derepression of the nemRA-gloA operon (PubMed:18567656, PubMed:23506073, PubMed:23536188).</text>
</comment>
<comment type="interaction">
    <interactant intactId="EBI-544803">
        <id>P67430</id>
    </interactant>
    <interactant intactId="EBI-544810">
        <id>P04951</id>
        <label>kdsB</label>
    </interactant>
    <organismsDiffer>false</organismsDiffer>
    <experiments>3</experiments>
</comment>
<comment type="induction">
    <text evidence="2 4">Autoregulated (PubMed:18567656). Up-regulated by hypochlorous acid (HOCl), the active component of household bleach (PubMed:23536188).</text>
</comment>
<comment type="PTM">
    <text evidence="3">Cys-21 and Cys-116 form reversible intermolecular disulfide bonds in the presence of reactive electrophilic species (RES). Formation of disulfide bonds leads to dimerization of NemR, which alters DNA binding affinity and NemR activity.</text>
</comment>
<comment type="PTM">
    <text evidence="4 6">Oxidized on Cys-106. Reversible oxidative modification of Cys-106 plays the central role in the sensing of and response to bleach and other RCS (PubMed:23536188). It leads to the formation of a reversible sulfenamide bond between Cys-106 and Lys-175 (PubMed:25867078). Oxidation alters DNA binding affinity and NemR activity (PubMed:23536188).</text>
</comment>
<comment type="disruption phenotype">
    <text evidence="4">Deletion mutant is more resistant to methylglyoxal than wild-type strain.</text>
</comment>
<comment type="sequence caution" evidence="9">
    <conflict type="erroneous initiation">
        <sequence resource="EMBL-CDS" id="BAE76492"/>
    </conflict>
</comment>
<accession>P67430</accession>
<accession>P76189</accession>
<accession>Q2MB64</accession>
<name>NEMR_ECOLI</name>